<proteinExistence type="inferred from homology"/>
<dbReference type="EC" id="2.3.1.181" evidence="1"/>
<dbReference type="EMBL" id="AM711867">
    <property type="protein sequence ID" value="CAN01253.1"/>
    <property type="molecule type" value="Genomic_DNA"/>
</dbReference>
<dbReference type="RefSeq" id="WP_012037895.1">
    <property type="nucleotide sequence ID" value="NC_009480.1"/>
</dbReference>
<dbReference type="SMR" id="A5CQA0"/>
<dbReference type="KEGG" id="cmi:CMM_1209"/>
<dbReference type="eggNOG" id="COG0321">
    <property type="taxonomic scope" value="Bacteria"/>
</dbReference>
<dbReference type="HOGENOM" id="CLU_035168_2_1_11"/>
<dbReference type="OrthoDB" id="9787061at2"/>
<dbReference type="UniPathway" id="UPA00538">
    <property type="reaction ID" value="UER00592"/>
</dbReference>
<dbReference type="Proteomes" id="UP000001564">
    <property type="component" value="Chromosome"/>
</dbReference>
<dbReference type="GO" id="GO:0005737">
    <property type="term" value="C:cytoplasm"/>
    <property type="evidence" value="ECO:0007669"/>
    <property type="project" value="UniProtKB-SubCell"/>
</dbReference>
<dbReference type="GO" id="GO:0033819">
    <property type="term" value="F:lipoyl(octanoyl) transferase activity"/>
    <property type="evidence" value="ECO:0007669"/>
    <property type="project" value="UniProtKB-EC"/>
</dbReference>
<dbReference type="GO" id="GO:0036211">
    <property type="term" value="P:protein modification process"/>
    <property type="evidence" value="ECO:0007669"/>
    <property type="project" value="InterPro"/>
</dbReference>
<dbReference type="CDD" id="cd16444">
    <property type="entry name" value="LipB"/>
    <property type="match status" value="1"/>
</dbReference>
<dbReference type="Gene3D" id="3.30.930.10">
    <property type="entry name" value="Bira Bifunctional Protein, Domain 2"/>
    <property type="match status" value="1"/>
</dbReference>
<dbReference type="HAMAP" id="MF_00013">
    <property type="entry name" value="LipB"/>
    <property type="match status" value="1"/>
</dbReference>
<dbReference type="InterPro" id="IPR045864">
    <property type="entry name" value="aa-tRNA-synth_II/BPL/LPL"/>
</dbReference>
<dbReference type="InterPro" id="IPR004143">
    <property type="entry name" value="BPL_LPL_catalytic"/>
</dbReference>
<dbReference type="InterPro" id="IPR000544">
    <property type="entry name" value="Octanoyltransferase"/>
</dbReference>
<dbReference type="InterPro" id="IPR020605">
    <property type="entry name" value="Octanoyltransferase_CS"/>
</dbReference>
<dbReference type="NCBIfam" id="TIGR00214">
    <property type="entry name" value="lipB"/>
    <property type="match status" value="1"/>
</dbReference>
<dbReference type="NCBIfam" id="NF010925">
    <property type="entry name" value="PRK14345.1"/>
    <property type="match status" value="1"/>
</dbReference>
<dbReference type="PANTHER" id="PTHR10993:SF7">
    <property type="entry name" value="LIPOYLTRANSFERASE 2, MITOCHONDRIAL-RELATED"/>
    <property type="match status" value="1"/>
</dbReference>
<dbReference type="PANTHER" id="PTHR10993">
    <property type="entry name" value="OCTANOYLTRANSFERASE"/>
    <property type="match status" value="1"/>
</dbReference>
<dbReference type="Pfam" id="PF21948">
    <property type="entry name" value="LplA-B_cat"/>
    <property type="match status" value="1"/>
</dbReference>
<dbReference type="PIRSF" id="PIRSF016262">
    <property type="entry name" value="LPLase"/>
    <property type="match status" value="1"/>
</dbReference>
<dbReference type="SUPFAM" id="SSF55681">
    <property type="entry name" value="Class II aaRS and biotin synthetases"/>
    <property type="match status" value="1"/>
</dbReference>
<dbReference type="PROSITE" id="PS51733">
    <property type="entry name" value="BPL_LPL_CATALYTIC"/>
    <property type="match status" value="1"/>
</dbReference>
<dbReference type="PROSITE" id="PS01313">
    <property type="entry name" value="LIPB"/>
    <property type="match status" value="1"/>
</dbReference>
<name>LIPB_CLAM3</name>
<comment type="function">
    <text evidence="1">Catalyzes the transfer of endogenously produced octanoic acid from octanoyl-acyl-carrier-protein onto the lipoyl domains of lipoate-dependent enzymes. Lipoyl-ACP can also act as a substrate although octanoyl-ACP is likely to be the physiological substrate.</text>
</comment>
<comment type="catalytic activity">
    <reaction evidence="1">
        <text>octanoyl-[ACP] + L-lysyl-[protein] = N(6)-octanoyl-L-lysyl-[protein] + holo-[ACP] + H(+)</text>
        <dbReference type="Rhea" id="RHEA:17665"/>
        <dbReference type="Rhea" id="RHEA-COMP:9636"/>
        <dbReference type="Rhea" id="RHEA-COMP:9685"/>
        <dbReference type="Rhea" id="RHEA-COMP:9752"/>
        <dbReference type="Rhea" id="RHEA-COMP:9928"/>
        <dbReference type="ChEBI" id="CHEBI:15378"/>
        <dbReference type="ChEBI" id="CHEBI:29969"/>
        <dbReference type="ChEBI" id="CHEBI:64479"/>
        <dbReference type="ChEBI" id="CHEBI:78463"/>
        <dbReference type="ChEBI" id="CHEBI:78809"/>
        <dbReference type="EC" id="2.3.1.181"/>
    </reaction>
</comment>
<comment type="pathway">
    <text evidence="1">Protein modification; protein lipoylation via endogenous pathway; protein N(6)-(lipoyl)lysine from octanoyl-[acyl-carrier-protein]: step 1/2.</text>
</comment>
<comment type="subcellular location">
    <subcellularLocation>
        <location evidence="1">Cytoplasm</location>
    </subcellularLocation>
</comment>
<comment type="miscellaneous">
    <text evidence="1">In the reaction, the free carboxyl group of octanoic acid is attached via an amide linkage to the epsilon-amino group of a specific lysine residue of lipoyl domains of lipoate-dependent enzymes.</text>
</comment>
<comment type="similarity">
    <text evidence="1">Belongs to the LipB family.</text>
</comment>
<protein>
    <recommendedName>
        <fullName evidence="1">Octanoyltransferase</fullName>
        <ecNumber evidence="1">2.3.1.181</ecNumber>
    </recommendedName>
    <alternativeName>
        <fullName evidence="1">Lipoate-protein ligase B</fullName>
    </alternativeName>
    <alternativeName>
        <fullName evidence="1">Lipoyl/octanoyl transferase</fullName>
    </alternativeName>
    <alternativeName>
        <fullName evidence="1">Octanoyl-[acyl-carrier-protein]-protein N-octanoyltransferase</fullName>
    </alternativeName>
</protein>
<gene>
    <name evidence="1" type="primary">lipB</name>
    <name type="ordered locus">CMM_1209</name>
</gene>
<sequence length="233" mass="24782">MVDIVVTGLSANSVPYIEALERQRALHADVVAGRAQDTVILLEHPSVYTAGRRTEPEDRPRDGTPVIDVDRGGRITWHGPGQLVGYPIVRLPEPLDVVAHVRRLEDALIALLADLDVASYRVDGRSGVWIRGAAPDGSPRDEKVAAIGVRVAERVTMHGFALNCSNAFDAYDRIVPCGIRDAGVTSISRAIGRTVTPADVVPLLRPHLVRALSSNGSAMPATAPLSSVAGARA</sequence>
<accession>A5CQA0</accession>
<reference key="1">
    <citation type="journal article" date="2008" name="J. Bacteriol.">
        <title>The genome sequence of the tomato-pathogenic actinomycete Clavibacter michiganensis subsp. michiganensis NCPPB382 reveals a large island involved in pathogenicity.</title>
        <authorList>
            <person name="Gartemann K.-H."/>
            <person name="Abt B."/>
            <person name="Bekel T."/>
            <person name="Burger A."/>
            <person name="Engemann J."/>
            <person name="Fluegel M."/>
            <person name="Gaigalat L."/>
            <person name="Goesmann A."/>
            <person name="Graefen I."/>
            <person name="Kalinowski J."/>
            <person name="Kaup O."/>
            <person name="Kirchner O."/>
            <person name="Krause L."/>
            <person name="Linke B."/>
            <person name="McHardy A."/>
            <person name="Meyer F."/>
            <person name="Pohle S."/>
            <person name="Rueckert C."/>
            <person name="Schneiker S."/>
            <person name="Zellermann E.-M."/>
            <person name="Puehler A."/>
            <person name="Eichenlaub R."/>
            <person name="Kaiser O."/>
            <person name="Bartels D."/>
        </authorList>
    </citation>
    <scope>NUCLEOTIDE SEQUENCE [LARGE SCALE GENOMIC DNA]</scope>
    <source>
        <strain>NCPPB 382</strain>
    </source>
</reference>
<organism>
    <name type="scientific">Clavibacter michiganensis subsp. michiganensis (strain NCPPB 382)</name>
    <dbReference type="NCBI Taxonomy" id="443906"/>
    <lineage>
        <taxon>Bacteria</taxon>
        <taxon>Bacillati</taxon>
        <taxon>Actinomycetota</taxon>
        <taxon>Actinomycetes</taxon>
        <taxon>Micrococcales</taxon>
        <taxon>Microbacteriaceae</taxon>
        <taxon>Clavibacter</taxon>
    </lineage>
</organism>
<feature type="chain" id="PRO_1000057102" description="Octanoyltransferase">
    <location>
        <begin position="1"/>
        <end position="233"/>
    </location>
</feature>
<feature type="domain" description="BPL/LPL catalytic" evidence="2">
    <location>
        <begin position="33"/>
        <end position="216"/>
    </location>
</feature>
<feature type="active site" description="Acyl-thioester intermediate" evidence="1">
    <location>
        <position position="177"/>
    </location>
</feature>
<feature type="binding site" evidence="1">
    <location>
        <begin position="71"/>
        <end position="78"/>
    </location>
    <ligand>
        <name>substrate</name>
    </ligand>
</feature>
<feature type="binding site" evidence="1">
    <location>
        <begin position="146"/>
        <end position="148"/>
    </location>
    <ligand>
        <name>substrate</name>
    </ligand>
</feature>
<feature type="binding site" evidence="1">
    <location>
        <begin position="159"/>
        <end position="161"/>
    </location>
    <ligand>
        <name>substrate</name>
    </ligand>
</feature>
<feature type="site" description="Lowers pKa of active site Cys" evidence="1">
    <location>
        <position position="143"/>
    </location>
</feature>
<keyword id="KW-0012">Acyltransferase</keyword>
<keyword id="KW-0963">Cytoplasm</keyword>
<keyword id="KW-0808">Transferase</keyword>
<evidence type="ECO:0000255" key="1">
    <source>
        <dbReference type="HAMAP-Rule" id="MF_00013"/>
    </source>
</evidence>
<evidence type="ECO:0000255" key="2">
    <source>
        <dbReference type="PROSITE-ProRule" id="PRU01067"/>
    </source>
</evidence>